<sequence length="96" mass="11250">MHTFLTARLQAIEDVSNRNLSMLELILTRAIVTHWIILDLVLNLIFDSLITSFVIIYSLYSFVARNNKVLLFLLMSYAIFRFIVMYLLYIVSESID</sequence>
<organismHost>
    <name type="scientific">Vertebrata</name>
    <dbReference type="NCBI Taxonomy" id="7742"/>
</organismHost>
<evidence type="ECO:0000250" key="1"/>
<evidence type="ECO:0000255" key="2"/>
<evidence type="ECO:0000305" key="3"/>
<protein>
    <recommendedName>
        <fullName>Protein FPV129</fullName>
    </recommendedName>
</protein>
<proteinExistence type="evidence at transcript level"/>
<gene>
    <name type="ordered locus">FPV129</name>
    <name type="ORF">FP3</name>
</gene>
<reference key="1">
    <citation type="journal article" date="1988" name="J. Gen. Virol.">
        <title>Comparison of a conserved region in fowlpox virus and vaccinia virus genomes and the translocation of the fowlpox virus thymidine kinase gene.</title>
        <authorList>
            <person name="Binns M.M."/>
            <person name="Tomley F.M."/>
            <person name="Campbell J."/>
            <person name="Boursnell M.E.G."/>
        </authorList>
    </citation>
    <scope>NUCLEOTIDE SEQUENCE [GENOMIC DNA]</scope>
    <source>
        <strain>FP-9 / Isolate HP-444</strain>
    </source>
</reference>
<reference key="2">
    <citation type="journal article" date="2000" name="J. Virol.">
        <title>The genome of fowlpox virus.</title>
        <authorList>
            <person name="Afonso C.L."/>
            <person name="Tulman E.R."/>
            <person name="Lu Z."/>
            <person name="Zsak L."/>
            <person name="Kutish G.F."/>
            <person name="Rock D.L."/>
        </authorList>
    </citation>
    <scope>NUCLEOTIDE SEQUENCE [LARGE SCALE GENOMIC DNA]</scope>
</reference>
<feature type="chain" id="PRO_0000099620" description="Protein FPV129">
    <location>
        <begin position="1"/>
        <end position="96"/>
    </location>
</feature>
<feature type="transmembrane region" description="Helical" evidence="2">
    <location>
        <begin position="36"/>
        <end position="56"/>
    </location>
</feature>
<feature type="transmembrane region" description="Helical" evidence="2">
    <location>
        <begin position="71"/>
        <end position="91"/>
    </location>
</feature>
<keyword id="KW-0244">Early protein</keyword>
<keyword id="KW-1035">Host cytoplasm</keyword>
<keyword id="KW-0472">Membrane</keyword>
<keyword id="KW-1185">Reference proteome</keyword>
<keyword id="KW-0812">Transmembrane</keyword>
<keyword id="KW-1133">Transmembrane helix</keyword>
<keyword id="KW-0946">Virion</keyword>
<accession>P15911</accession>
<organism>
    <name type="scientific">Fowlpox virus (strain NVSL)</name>
    <name type="common">FPV</name>
    <dbReference type="NCBI Taxonomy" id="928301"/>
    <lineage>
        <taxon>Viruses</taxon>
        <taxon>Varidnaviria</taxon>
        <taxon>Bamfordvirae</taxon>
        <taxon>Nucleocytoviricota</taxon>
        <taxon>Pokkesviricetes</taxon>
        <taxon>Chitovirales</taxon>
        <taxon>Poxviridae</taxon>
        <taxon>Chordopoxvirinae</taxon>
        <taxon>Avipoxvirus</taxon>
        <taxon>Fowlpox virus</taxon>
    </lineage>
</organism>
<comment type="function">
    <text evidence="1">Early protein involved in early virion morphogenesis. Participates in the formation and elongation of crescent-shaped membrane precursors of immature virions in cytoplasmic factories (By similarity).</text>
</comment>
<comment type="subcellular location">
    <subcellularLocation>
        <location evidence="3">Virion membrane</location>
        <topology evidence="3">Multi-pass membrane protein</topology>
    </subcellularLocation>
    <subcellularLocation>
        <location evidence="1">Host cytoplasm</location>
    </subcellularLocation>
    <text evidence="1">Localizes in cytoplasmic virus factories.</text>
</comment>
<comment type="induction">
    <text>Expressed in the early phase of the viral replicative cycle.</text>
</comment>
<comment type="similarity">
    <text evidence="3">Belongs to the chordopoxvirinae L2 family.</text>
</comment>
<dbReference type="EMBL" id="D00320">
    <property type="protein sequence ID" value="BAA00226.1"/>
    <property type="molecule type" value="Genomic_DNA"/>
</dbReference>
<dbReference type="EMBL" id="AF198100">
    <property type="protein sequence ID" value="AAF44473.1"/>
    <property type="molecule type" value="Genomic_DNA"/>
</dbReference>
<dbReference type="PIR" id="JS0223">
    <property type="entry name" value="WMVZP3"/>
</dbReference>
<dbReference type="RefSeq" id="NP_039092.1">
    <property type="nucleotide sequence ID" value="NC_002188.1"/>
</dbReference>
<dbReference type="SMR" id="P15911"/>
<dbReference type="GeneID" id="1486677"/>
<dbReference type="KEGG" id="vg:1486677"/>
<dbReference type="Proteomes" id="UP000008597">
    <property type="component" value="Segment"/>
</dbReference>
<dbReference type="GO" id="GO:0030430">
    <property type="term" value="C:host cell cytoplasm"/>
    <property type="evidence" value="ECO:0007669"/>
    <property type="project" value="UniProtKB-SubCell"/>
</dbReference>
<dbReference type="GO" id="GO:0016020">
    <property type="term" value="C:membrane"/>
    <property type="evidence" value="ECO:0007669"/>
    <property type="project" value="UniProtKB-KW"/>
</dbReference>
<dbReference type="GO" id="GO:0055036">
    <property type="term" value="C:virion membrane"/>
    <property type="evidence" value="ECO:0007669"/>
    <property type="project" value="UniProtKB-SubCell"/>
</dbReference>
<dbReference type="InterPro" id="IPR008447">
    <property type="entry name" value="Prot_L2"/>
</dbReference>
<dbReference type="Pfam" id="PF05803">
    <property type="entry name" value="Chordopox_L2"/>
    <property type="match status" value="1"/>
</dbReference>
<name>L2_FOWPN</name>